<evidence type="ECO:0000255" key="1">
    <source>
        <dbReference type="HAMAP-Rule" id="MF_00652"/>
    </source>
</evidence>
<sequence length="257" mass="29547">MLILISPAKTLDYQSPLATTRYTQPELLEYSQQLIGIARKLSAPQIGKLMSISDKLADLNATRFHDWHPDFTPQNARQAILAFKGDVYTGLQAETLTEDDFDFAQQHLRMLSGLYGVLRPLDLMQPYRLEMGIRLENPRGKDLYQFWGDTITEKLNQALRDQGDDIVINLASDEYFKSVKTPKLQGQLIKPVFLDEKNGKFKVISFYAKKARGLMSRYIIENRLTQPEQLKAFNSEGYFFDADASEKGELVFKRHEQ</sequence>
<protein>
    <recommendedName>
        <fullName evidence="1">UPF0246 protein KPN78578_00060</fullName>
    </recommendedName>
</protein>
<gene>
    <name type="ordered locus">KPN78578_00060</name>
    <name type="ORF">KPN_00006</name>
</gene>
<comment type="similarity">
    <text evidence="1">Belongs to the UPF0246 family.</text>
</comment>
<accession>A6T4E6</accession>
<dbReference type="EMBL" id="CP000647">
    <property type="protein sequence ID" value="ABR75467.1"/>
    <property type="molecule type" value="Genomic_DNA"/>
</dbReference>
<dbReference type="SMR" id="A6T4E6"/>
<dbReference type="STRING" id="272620.KPN_00006"/>
<dbReference type="PaxDb" id="272620-KPN_00006"/>
<dbReference type="EnsemblBacteria" id="ABR75467">
    <property type="protein sequence ID" value="ABR75467"/>
    <property type="gene ID" value="KPN_00006"/>
</dbReference>
<dbReference type="KEGG" id="kpn:KPN_00006"/>
<dbReference type="HOGENOM" id="CLU_061989_0_0_6"/>
<dbReference type="Proteomes" id="UP000000265">
    <property type="component" value="Chromosome"/>
</dbReference>
<dbReference type="GO" id="GO:0005829">
    <property type="term" value="C:cytosol"/>
    <property type="evidence" value="ECO:0007669"/>
    <property type="project" value="TreeGrafter"/>
</dbReference>
<dbReference type="GO" id="GO:0033194">
    <property type="term" value="P:response to hydroperoxide"/>
    <property type="evidence" value="ECO:0007669"/>
    <property type="project" value="TreeGrafter"/>
</dbReference>
<dbReference type="HAMAP" id="MF_00652">
    <property type="entry name" value="UPF0246"/>
    <property type="match status" value="1"/>
</dbReference>
<dbReference type="InterPro" id="IPR005583">
    <property type="entry name" value="YaaA"/>
</dbReference>
<dbReference type="NCBIfam" id="NF002541">
    <property type="entry name" value="PRK02101.1-1"/>
    <property type="match status" value="1"/>
</dbReference>
<dbReference type="NCBIfam" id="NF002542">
    <property type="entry name" value="PRK02101.1-3"/>
    <property type="match status" value="1"/>
</dbReference>
<dbReference type="PANTHER" id="PTHR30283:SF4">
    <property type="entry name" value="PEROXIDE STRESS RESISTANCE PROTEIN YAAA"/>
    <property type="match status" value="1"/>
</dbReference>
<dbReference type="PANTHER" id="PTHR30283">
    <property type="entry name" value="PEROXIDE STRESS RESPONSE PROTEIN YAAA"/>
    <property type="match status" value="1"/>
</dbReference>
<dbReference type="Pfam" id="PF03883">
    <property type="entry name" value="H2O2_YaaD"/>
    <property type="match status" value="1"/>
</dbReference>
<proteinExistence type="inferred from homology"/>
<reference key="1">
    <citation type="submission" date="2006-09" db="EMBL/GenBank/DDBJ databases">
        <authorList>
            <consortium name="The Klebsiella pneumonia Genome Sequencing Project"/>
            <person name="McClelland M."/>
            <person name="Sanderson E.K."/>
            <person name="Spieth J."/>
            <person name="Clifton W.S."/>
            <person name="Latreille P."/>
            <person name="Sabo A."/>
            <person name="Pepin K."/>
            <person name="Bhonagiri V."/>
            <person name="Porwollik S."/>
            <person name="Ali J."/>
            <person name="Wilson R.K."/>
        </authorList>
    </citation>
    <scope>NUCLEOTIDE SEQUENCE [LARGE SCALE GENOMIC DNA]</scope>
    <source>
        <strain>ATCC 700721 / MGH 78578</strain>
    </source>
</reference>
<feature type="chain" id="PRO_1000061609" description="UPF0246 protein KPN78578_00060">
    <location>
        <begin position="1"/>
        <end position="257"/>
    </location>
</feature>
<name>Y006_KLEP7</name>
<organism>
    <name type="scientific">Klebsiella pneumoniae subsp. pneumoniae (strain ATCC 700721 / MGH 78578)</name>
    <dbReference type="NCBI Taxonomy" id="272620"/>
    <lineage>
        <taxon>Bacteria</taxon>
        <taxon>Pseudomonadati</taxon>
        <taxon>Pseudomonadota</taxon>
        <taxon>Gammaproteobacteria</taxon>
        <taxon>Enterobacterales</taxon>
        <taxon>Enterobacteriaceae</taxon>
        <taxon>Klebsiella/Raoultella group</taxon>
        <taxon>Klebsiella</taxon>
        <taxon>Klebsiella pneumoniae complex</taxon>
    </lineage>
</organism>